<comment type="function">
    <text evidence="1">May play a role in photosystem I and II biogenesis.</text>
</comment>
<comment type="subcellular location">
    <subcellularLocation>
        <location evidence="1">Plastid</location>
        <location evidence="1">Chloroplast thylakoid membrane</location>
        <topology evidence="1">Single-pass membrane protein</topology>
    </subcellularLocation>
</comment>
<comment type="similarity">
    <text evidence="1">Belongs to the PsbN family.</text>
</comment>
<comment type="caution">
    <text evidence="1">Originally thought to be a component of PSII; based on experiments in Synechocystis, N.tabacum and barley, and its absence from PSII in T.elongatus and T.vulcanus, this is probably not true.</text>
</comment>
<protein>
    <recommendedName>
        <fullName evidence="1">Protein PsbN</fullName>
    </recommendedName>
</protein>
<name>PSBN_RHDSA</name>
<organism>
    <name type="scientific">Rhodomonas salina</name>
    <name type="common">Cryptomonas salina</name>
    <dbReference type="NCBI Taxonomy" id="52970"/>
    <lineage>
        <taxon>Eukaryota</taxon>
        <taxon>Cryptophyceae</taxon>
        <taxon>Pyrenomonadales</taxon>
        <taxon>Pyrenomonadaceae</taxon>
        <taxon>Rhodomonas</taxon>
    </lineage>
</organism>
<dbReference type="EMBL" id="EF508371">
    <property type="protein sequence ID" value="ABO70798.1"/>
    <property type="molecule type" value="Genomic_DNA"/>
</dbReference>
<dbReference type="RefSeq" id="YP_001293612.1">
    <property type="nucleotide sequence ID" value="NC_009573.1"/>
</dbReference>
<dbReference type="SMR" id="A6MW33"/>
<dbReference type="GeneID" id="5228658"/>
<dbReference type="GO" id="GO:0009535">
    <property type="term" value="C:chloroplast thylakoid membrane"/>
    <property type="evidence" value="ECO:0007669"/>
    <property type="project" value="UniProtKB-SubCell"/>
</dbReference>
<dbReference type="GO" id="GO:0015979">
    <property type="term" value="P:photosynthesis"/>
    <property type="evidence" value="ECO:0007669"/>
    <property type="project" value="InterPro"/>
</dbReference>
<dbReference type="HAMAP" id="MF_00293">
    <property type="entry name" value="PSII_PsbN"/>
    <property type="match status" value="1"/>
</dbReference>
<dbReference type="InterPro" id="IPR003398">
    <property type="entry name" value="PSII_PsbN"/>
</dbReference>
<dbReference type="NCBIfam" id="NF009650">
    <property type="entry name" value="PRK13183.1"/>
    <property type="match status" value="1"/>
</dbReference>
<dbReference type="PANTHER" id="PTHR35326">
    <property type="entry name" value="PROTEIN PSBN"/>
    <property type="match status" value="1"/>
</dbReference>
<dbReference type="PANTHER" id="PTHR35326:SF3">
    <property type="entry name" value="PROTEIN PSBN"/>
    <property type="match status" value="1"/>
</dbReference>
<dbReference type="Pfam" id="PF02468">
    <property type="entry name" value="PsbN"/>
    <property type="match status" value="1"/>
</dbReference>
<geneLocation type="chloroplast"/>
<evidence type="ECO:0000255" key="1">
    <source>
        <dbReference type="HAMAP-Rule" id="MF_00293"/>
    </source>
</evidence>
<proteinExistence type="inferred from homology"/>
<keyword id="KW-0150">Chloroplast</keyword>
<keyword id="KW-0472">Membrane</keyword>
<keyword id="KW-0934">Plastid</keyword>
<keyword id="KW-0793">Thylakoid</keyword>
<keyword id="KW-0812">Transmembrane</keyword>
<keyword id="KW-1133">Transmembrane helix</keyword>
<feature type="chain" id="PRO_0000362213" description="Protein PsbN">
    <location>
        <begin position="1"/>
        <end position="43"/>
    </location>
</feature>
<feature type="transmembrane region" description="Helical" evidence="1">
    <location>
        <begin position="7"/>
        <end position="27"/>
    </location>
</feature>
<gene>
    <name evidence="1" type="primary">psbN</name>
</gene>
<accession>A6MW33</accession>
<sequence>METATVLIVFIASLLLGVTGYSVYTAFGPNSKDLRDPFEDHED</sequence>
<reference key="1">
    <citation type="journal article" date="2007" name="Mol. Biol. Evol.">
        <title>Plastid genome sequence of the cryptophyte alga Rhodomonas salina CCMP1319: lateral transfer of putative DNA replication machinery and a test of chromist plastid phylogeny.</title>
        <authorList>
            <person name="Khan H."/>
            <person name="Parks N."/>
            <person name="Kozera C."/>
            <person name="Curtis B.A."/>
            <person name="Parsons B.J."/>
            <person name="Bowman S."/>
            <person name="Archibald J.M."/>
        </authorList>
    </citation>
    <scope>NUCLEOTIDE SEQUENCE [LARGE SCALE GENOMIC DNA]</scope>
    <source>
        <strain>CCMP1319 / NEPCC76 / CS-174</strain>
    </source>
</reference>